<gene>
    <name evidence="1" type="primary">aspS</name>
    <name type="ordered locus">HDEF_0868</name>
</gene>
<sequence length="589" mass="66750">MRTHCCGELSLSVLNQTVCLCGWVDRRRDLGGLIFIDMRDFSGIVQVFFDPEQQALFEQASSLRNEFCIQITGKVKARPHHQINQKMLTGAVEVFSENLTIINCSEPLPLDRNQNNTEEQRLRYRYLDLRRPEMLARLKTRSKITSFVRQFLDKEGFLDVETPTLTKATPEGARDYLVPSRVQKGKFYALPQSPQLFKQLLMVSGVDRYYQIVKCFRDEDLRADRQPEFTQIDIETSFMTAQQVRTVTEKLIRQLWLQIKNIHLGAFPVMTFEEAIRRFGSDKPDLRNPLELVDLDDVLKNVDFKVFSEPANDAHSRVVGIRVPNGADISRKQIDEYTAFVHIYAARGLAWLKIKQADAGLEGIQSPIAKFLSPEILERILKRTQAKDGDLLFFGADKKKIVTDAMGALRLKLGLDRQLTQLDRWAPLWVIDFPMFSNDTETGLTAMHHPFTSPKNTNLSEFAANPETALANAYDMVINGYEVGGGSVRIHHSDLQQQVFSLIGIEANQQKQQFGFLLEALKYGAPPHAGIAFGLDRLVMLLTGTNNIRDVIAFPKTTAAACLMTDAPSFASDSSLQELFIDVVKKEKK</sequence>
<protein>
    <recommendedName>
        <fullName evidence="1">Aspartate--tRNA ligase</fullName>
        <ecNumber evidence="1">6.1.1.12</ecNumber>
    </recommendedName>
    <alternativeName>
        <fullName evidence="1">Aspartyl-tRNA synthetase</fullName>
        <shortName evidence="1">AspRS</shortName>
    </alternativeName>
</protein>
<accession>C4K4U5</accession>
<organism>
    <name type="scientific">Hamiltonella defensa subsp. Acyrthosiphon pisum (strain 5AT)</name>
    <dbReference type="NCBI Taxonomy" id="572265"/>
    <lineage>
        <taxon>Bacteria</taxon>
        <taxon>Pseudomonadati</taxon>
        <taxon>Pseudomonadota</taxon>
        <taxon>Gammaproteobacteria</taxon>
        <taxon>Enterobacterales</taxon>
        <taxon>Enterobacteriaceae</taxon>
        <taxon>aphid secondary symbionts</taxon>
        <taxon>Candidatus Hamiltonella</taxon>
    </lineage>
</organism>
<evidence type="ECO:0000255" key="1">
    <source>
        <dbReference type="HAMAP-Rule" id="MF_00044"/>
    </source>
</evidence>
<keyword id="KW-0030">Aminoacyl-tRNA synthetase</keyword>
<keyword id="KW-0067">ATP-binding</keyword>
<keyword id="KW-0963">Cytoplasm</keyword>
<keyword id="KW-0436">Ligase</keyword>
<keyword id="KW-0547">Nucleotide-binding</keyword>
<keyword id="KW-0648">Protein biosynthesis</keyword>
<reference key="1">
    <citation type="journal article" date="2009" name="Proc. Natl. Acad. Sci. U.S.A.">
        <title>Hamiltonella defensa, genome evolution of protective bacterial endosymbiont from pathogenic ancestors.</title>
        <authorList>
            <person name="Degnan P.H."/>
            <person name="Yu Y."/>
            <person name="Sisneros N."/>
            <person name="Wing R.A."/>
            <person name="Moran N.A."/>
        </authorList>
    </citation>
    <scope>NUCLEOTIDE SEQUENCE [LARGE SCALE GENOMIC DNA]</scope>
    <source>
        <strain>5AT</strain>
    </source>
</reference>
<dbReference type="EC" id="6.1.1.12" evidence="1"/>
<dbReference type="EMBL" id="CP001277">
    <property type="protein sequence ID" value="ACQ67588.1"/>
    <property type="molecule type" value="Genomic_DNA"/>
</dbReference>
<dbReference type="RefSeq" id="WP_015873403.1">
    <property type="nucleotide sequence ID" value="NC_012751.1"/>
</dbReference>
<dbReference type="SMR" id="C4K4U5"/>
<dbReference type="STRING" id="572265.HDEF_0868"/>
<dbReference type="GeneID" id="66260701"/>
<dbReference type="KEGG" id="hde:HDEF_0868"/>
<dbReference type="eggNOG" id="COG0173">
    <property type="taxonomic scope" value="Bacteria"/>
</dbReference>
<dbReference type="HOGENOM" id="CLU_014330_3_2_6"/>
<dbReference type="Proteomes" id="UP000002334">
    <property type="component" value="Chromosome"/>
</dbReference>
<dbReference type="GO" id="GO:0005737">
    <property type="term" value="C:cytoplasm"/>
    <property type="evidence" value="ECO:0007669"/>
    <property type="project" value="UniProtKB-SubCell"/>
</dbReference>
<dbReference type="GO" id="GO:0004815">
    <property type="term" value="F:aspartate-tRNA ligase activity"/>
    <property type="evidence" value="ECO:0007669"/>
    <property type="project" value="UniProtKB-UniRule"/>
</dbReference>
<dbReference type="GO" id="GO:0005524">
    <property type="term" value="F:ATP binding"/>
    <property type="evidence" value="ECO:0007669"/>
    <property type="project" value="UniProtKB-UniRule"/>
</dbReference>
<dbReference type="GO" id="GO:0003676">
    <property type="term" value="F:nucleic acid binding"/>
    <property type="evidence" value="ECO:0007669"/>
    <property type="project" value="InterPro"/>
</dbReference>
<dbReference type="GO" id="GO:0006422">
    <property type="term" value="P:aspartyl-tRNA aminoacylation"/>
    <property type="evidence" value="ECO:0007669"/>
    <property type="project" value="UniProtKB-UniRule"/>
</dbReference>
<dbReference type="CDD" id="cd00777">
    <property type="entry name" value="AspRS_core"/>
    <property type="match status" value="1"/>
</dbReference>
<dbReference type="CDD" id="cd04317">
    <property type="entry name" value="EcAspRS_like_N"/>
    <property type="match status" value="1"/>
</dbReference>
<dbReference type="Gene3D" id="3.30.930.10">
    <property type="entry name" value="Bira Bifunctional Protein, Domain 2"/>
    <property type="match status" value="1"/>
</dbReference>
<dbReference type="Gene3D" id="3.30.1360.30">
    <property type="entry name" value="GAD-like domain"/>
    <property type="match status" value="1"/>
</dbReference>
<dbReference type="Gene3D" id="2.40.50.140">
    <property type="entry name" value="Nucleic acid-binding proteins"/>
    <property type="match status" value="1"/>
</dbReference>
<dbReference type="HAMAP" id="MF_00044">
    <property type="entry name" value="Asp_tRNA_synth_type1"/>
    <property type="match status" value="1"/>
</dbReference>
<dbReference type="InterPro" id="IPR004364">
    <property type="entry name" value="Aa-tRNA-synt_II"/>
</dbReference>
<dbReference type="InterPro" id="IPR006195">
    <property type="entry name" value="aa-tRNA-synth_II"/>
</dbReference>
<dbReference type="InterPro" id="IPR045864">
    <property type="entry name" value="aa-tRNA-synth_II/BPL/LPL"/>
</dbReference>
<dbReference type="InterPro" id="IPR004524">
    <property type="entry name" value="Asp-tRNA-ligase_1"/>
</dbReference>
<dbReference type="InterPro" id="IPR047089">
    <property type="entry name" value="Asp-tRNA-ligase_1_N"/>
</dbReference>
<dbReference type="InterPro" id="IPR002312">
    <property type="entry name" value="Asp/Asn-tRNA-synth_IIb"/>
</dbReference>
<dbReference type="InterPro" id="IPR047090">
    <property type="entry name" value="AspRS_core"/>
</dbReference>
<dbReference type="InterPro" id="IPR004115">
    <property type="entry name" value="GAD-like_sf"/>
</dbReference>
<dbReference type="InterPro" id="IPR029351">
    <property type="entry name" value="GAD_dom"/>
</dbReference>
<dbReference type="InterPro" id="IPR012340">
    <property type="entry name" value="NA-bd_OB-fold"/>
</dbReference>
<dbReference type="InterPro" id="IPR004365">
    <property type="entry name" value="NA-bd_OB_tRNA"/>
</dbReference>
<dbReference type="NCBIfam" id="TIGR00459">
    <property type="entry name" value="aspS_bact"/>
    <property type="match status" value="1"/>
</dbReference>
<dbReference type="NCBIfam" id="NF001750">
    <property type="entry name" value="PRK00476.1"/>
    <property type="match status" value="1"/>
</dbReference>
<dbReference type="PANTHER" id="PTHR22594:SF5">
    <property type="entry name" value="ASPARTATE--TRNA LIGASE, MITOCHONDRIAL"/>
    <property type="match status" value="1"/>
</dbReference>
<dbReference type="PANTHER" id="PTHR22594">
    <property type="entry name" value="ASPARTYL/LYSYL-TRNA SYNTHETASE"/>
    <property type="match status" value="1"/>
</dbReference>
<dbReference type="Pfam" id="PF02938">
    <property type="entry name" value="GAD"/>
    <property type="match status" value="1"/>
</dbReference>
<dbReference type="Pfam" id="PF00152">
    <property type="entry name" value="tRNA-synt_2"/>
    <property type="match status" value="1"/>
</dbReference>
<dbReference type="Pfam" id="PF01336">
    <property type="entry name" value="tRNA_anti-codon"/>
    <property type="match status" value="1"/>
</dbReference>
<dbReference type="PRINTS" id="PR01042">
    <property type="entry name" value="TRNASYNTHASP"/>
</dbReference>
<dbReference type="SUPFAM" id="SSF55681">
    <property type="entry name" value="Class II aaRS and biotin synthetases"/>
    <property type="match status" value="1"/>
</dbReference>
<dbReference type="SUPFAM" id="SSF55261">
    <property type="entry name" value="GAD domain-like"/>
    <property type="match status" value="1"/>
</dbReference>
<dbReference type="SUPFAM" id="SSF50249">
    <property type="entry name" value="Nucleic acid-binding proteins"/>
    <property type="match status" value="1"/>
</dbReference>
<dbReference type="PROSITE" id="PS50862">
    <property type="entry name" value="AA_TRNA_LIGASE_II"/>
    <property type="match status" value="1"/>
</dbReference>
<proteinExistence type="inferred from homology"/>
<comment type="function">
    <text evidence="1">Catalyzes the attachment of L-aspartate to tRNA(Asp) in a two-step reaction: L-aspartate is first activated by ATP to form Asp-AMP and then transferred to the acceptor end of tRNA(Asp).</text>
</comment>
<comment type="catalytic activity">
    <reaction evidence="1">
        <text>tRNA(Asp) + L-aspartate + ATP = L-aspartyl-tRNA(Asp) + AMP + diphosphate</text>
        <dbReference type="Rhea" id="RHEA:19649"/>
        <dbReference type="Rhea" id="RHEA-COMP:9660"/>
        <dbReference type="Rhea" id="RHEA-COMP:9678"/>
        <dbReference type="ChEBI" id="CHEBI:29991"/>
        <dbReference type="ChEBI" id="CHEBI:30616"/>
        <dbReference type="ChEBI" id="CHEBI:33019"/>
        <dbReference type="ChEBI" id="CHEBI:78442"/>
        <dbReference type="ChEBI" id="CHEBI:78516"/>
        <dbReference type="ChEBI" id="CHEBI:456215"/>
        <dbReference type="EC" id="6.1.1.12"/>
    </reaction>
</comment>
<comment type="subunit">
    <text evidence="1">Homodimer.</text>
</comment>
<comment type="subcellular location">
    <subcellularLocation>
        <location evidence="1">Cytoplasm</location>
    </subcellularLocation>
</comment>
<comment type="similarity">
    <text evidence="1">Belongs to the class-II aminoacyl-tRNA synthetase family. Type 1 subfamily.</text>
</comment>
<feature type="chain" id="PRO_1000202161" description="Aspartate--tRNA ligase">
    <location>
        <begin position="1"/>
        <end position="589"/>
    </location>
</feature>
<feature type="region of interest" description="Aspartate" evidence="1">
    <location>
        <begin position="195"/>
        <end position="198"/>
    </location>
</feature>
<feature type="binding site" evidence="1">
    <location>
        <position position="171"/>
    </location>
    <ligand>
        <name>L-aspartate</name>
        <dbReference type="ChEBI" id="CHEBI:29991"/>
    </ligand>
</feature>
<feature type="binding site" evidence="1">
    <location>
        <begin position="217"/>
        <end position="219"/>
    </location>
    <ligand>
        <name>ATP</name>
        <dbReference type="ChEBI" id="CHEBI:30616"/>
    </ligand>
</feature>
<feature type="binding site" evidence="1">
    <location>
        <position position="217"/>
    </location>
    <ligand>
        <name>L-aspartate</name>
        <dbReference type="ChEBI" id="CHEBI:29991"/>
    </ligand>
</feature>
<feature type="binding site" evidence="1">
    <location>
        <position position="226"/>
    </location>
    <ligand>
        <name>ATP</name>
        <dbReference type="ChEBI" id="CHEBI:30616"/>
    </ligand>
</feature>
<feature type="binding site" evidence="1">
    <location>
        <position position="448"/>
    </location>
    <ligand>
        <name>L-aspartate</name>
        <dbReference type="ChEBI" id="CHEBI:29991"/>
    </ligand>
</feature>
<feature type="binding site" evidence="1">
    <location>
        <position position="482"/>
    </location>
    <ligand>
        <name>ATP</name>
        <dbReference type="ChEBI" id="CHEBI:30616"/>
    </ligand>
</feature>
<feature type="binding site" evidence="1">
    <location>
        <position position="489"/>
    </location>
    <ligand>
        <name>L-aspartate</name>
        <dbReference type="ChEBI" id="CHEBI:29991"/>
    </ligand>
</feature>
<feature type="binding site" evidence="1">
    <location>
        <begin position="534"/>
        <end position="537"/>
    </location>
    <ligand>
        <name>ATP</name>
        <dbReference type="ChEBI" id="CHEBI:30616"/>
    </ligand>
</feature>
<name>SYD_HAMD5</name>